<name>HIS5_YERPE</name>
<proteinExistence type="inferred from homology"/>
<evidence type="ECO:0000255" key="1">
    <source>
        <dbReference type="HAMAP-Rule" id="MF_00278"/>
    </source>
</evidence>
<organism>
    <name type="scientific">Yersinia pestis</name>
    <dbReference type="NCBI Taxonomy" id="632"/>
    <lineage>
        <taxon>Bacteria</taxon>
        <taxon>Pseudomonadati</taxon>
        <taxon>Pseudomonadota</taxon>
        <taxon>Gammaproteobacteria</taxon>
        <taxon>Enterobacterales</taxon>
        <taxon>Yersiniaceae</taxon>
        <taxon>Yersinia</taxon>
    </lineage>
</organism>
<feature type="chain" id="PRO_0000152452" description="Imidazole glycerol phosphate synthase subunit HisH">
    <location>
        <begin position="1"/>
        <end position="196"/>
    </location>
</feature>
<feature type="domain" description="Glutamine amidotransferase type-1" evidence="1">
    <location>
        <begin position="2"/>
        <end position="196"/>
    </location>
</feature>
<feature type="active site" description="Nucleophile" evidence="1">
    <location>
        <position position="77"/>
    </location>
</feature>
<feature type="active site" evidence="1">
    <location>
        <position position="178"/>
    </location>
</feature>
<feature type="active site" evidence="1">
    <location>
        <position position="180"/>
    </location>
</feature>
<accession>Q8ZFX8</accession>
<accession>Q0WGM7</accession>
<reference key="1">
    <citation type="journal article" date="2001" name="Nature">
        <title>Genome sequence of Yersinia pestis, the causative agent of plague.</title>
        <authorList>
            <person name="Parkhill J."/>
            <person name="Wren B.W."/>
            <person name="Thomson N.R."/>
            <person name="Titball R.W."/>
            <person name="Holden M.T.G."/>
            <person name="Prentice M.B."/>
            <person name="Sebaihia M."/>
            <person name="James K.D."/>
            <person name="Churcher C.M."/>
            <person name="Mungall K.L."/>
            <person name="Baker S."/>
            <person name="Basham D."/>
            <person name="Bentley S.D."/>
            <person name="Brooks K."/>
            <person name="Cerdeno-Tarraga A.-M."/>
            <person name="Chillingworth T."/>
            <person name="Cronin A."/>
            <person name="Davies R.M."/>
            <person name="Davis P."/>
            <person name="Dougan G."/>
            <person name="Feltwell T."/>
            <person name="Hamlin N."/>
            <person name="Holroyd S."/>
            <person name="Jagels K."/>
            <person name="Karlyshev A.V."/>
            <person name="Leather S."/>
            <person name="Moule S."/>
            <person name="Oyston P.C.F."/>
            <person name="Quail M.A."/>
            <person name="Rutherford K.M."/>
            <person name="Simmonds M."/>
            <person name="Skelton J."/>
            <person name="Stevens K."/>
            <person name="Whitehead S."/>
            <person name="Barrell B.G."/>
        </authorList>
    </citation>
    <scope>NUCLEOTIDE SEQUENCE [LARGE SCALE GENOMIC DNA]</scope>
    <source>
        <strain>CO-92 / Biovar Orientalis</strain>
    </source>
</reference>
<reference key="2">
    <citation type="journal article" date="2002" name="J. Bacteriol.">
        <title>Genome sequence of Yersinia pestis KIM.</title>
        <authorList>
            <person name="Deng W."/>
            <person name="Burland V."/>
            <person name="Plunkett G. III"/>
            <person name="Boutin A."/>
            <person name="Mayhew G.F."/>
            <person name="Liss P."/>
            <person name="Perna N.T."/>
            <person name="Rose D.J."/>
            <person name="Mau B."/>
            <person name="Zhou S."/>
            <person name="Schwartz D.C."/>
            <person name="Fetherston J.D."/>
            <person name="Lindler L.E."/>
            <person name="Brubaker R.R."/>
            <person name="Plano G.V."/>
            <person name="Straley S.C."/>
            <person name="McDonough K.A."/>
            <person name="Nilles M.L."/>
            <person name="Matson J.S."/>
            <person name="Blattner F.R."/>
            <person name="Perry R.D."/>
        </authorList>
    </citation>
    <scope>NUCLEOTIDE SEQUENCE [LARGE SCALE GENOMIC DNA]</scope>
    <source>
        <strain>KIM10+ / Biovar Mediaevalis</strain>
    </source>
</reference>
<reference key="3">
    <citation type="journal article" date="2004" name="DNA Res.">
        <title>Complete genome sequence of Yersinia pestis strain 91001, an isolate avirulent to humans.</title>
        <authorList>
            <person name="Song Y."/>
            <person name="Tong Z."/>
            <person name="Wang J."/>
            <person name="Wang L."/>
            <person name="Guo Z."/>
            <person name="Han Y."/>
            <person name="Zhang J."/>
            <person name="Pei D."/>
            <person name="Zhou D."/>
            <person name="Qin H."/>
            <person name="Pang X."/>
            <person name="Han Y."/>
            <person name="Zhai J."/>
            <person name="Li M."/>
            <person name="Cui B."/>
            <person name="Qi Z."/>
            <person name="Jin L."/>
            <person name="Dai R."/>
            <person name="Chen F."/>
            <person name="Li S."/>
            <person name="Ye C."/>
            <person name="Du Z."/>
            <person name="Lin W."/>
            <person name="Wang J."/>
            <person name="Yu J."/>
            <person name="Yang H."/>
            <person name="Wang J."/>
            <person name="Huang P."/>
            <person name="Yang R."/>
        </authorList>
    </citation>
    <scope>NUCLEOTIDE SEQUENCE [LARGE SCALE GENOMIC DNA]</scope>
    <source>
        <strain>91001 / Biovar Mediaevalis</strain>
    </source>
</reference>
<protein>
    <recommendedName>
        <fullName evidence="1">Imidazole glycerol phosphate synthase subunit HisH</fullName>
        <ecNumber evidence="1">4.3.2.10</ecNumber>
    </recommendedName>
    <alternativeName>
        <fullName evidence="1">IGP synthase glutaminase subunit</fullName>
        <ecNumber evidence="1">3.5.1.2</ecNumber>
    </alternativeName>
    <alternativeName>
        <fullName evidence="1">IGP synthase subunit HisH</fullName>
    </alternativeName>
    <alternativeName>
        <fullName evidence="1">ImGP synthase subunit HisH</fullName>
        <shortName evidence="1">IGPS subunit HisH</shortName>
    </alternativeName>
</protein>
<sequence>MDVVILDTGCANLSSVTYAVQRLGYTPVISRDPAVVLRADKLFMPGVGTAHAAMEQLRQRELIELIKSCTQPVLGICLGMQLLATSSEESGGITTLGMIDAPVKKMTDFGLPLPHMGWNQITAQAGNHLFRGIPDGTYFYFVHGYAMPICPNTIAQTNYGEPFTAAVEKDNFFGVQFHPERSGAAGAQLMKNFLEM</sequence>
<dbReference type="EC" id="4.3.2.10" evidence="1"/>
<dbReference type="EC" id="3.5.1.2" evidence="1"/>
<dbReference type="EMBL" id="AL590842">
    <property type="protein sequence ID" value="CAL20191.1"/>
    <property type="molecule type" value="Genomic_DNA"/>
</dbReference>
<dbReference type="EMBL" id="AE009952">
    <property type="protein sequence ID" value="AAM86179.1"/>
    <property type="molecule type" value="Genomic_DNA"/>
</dbReference>
<dbReference type="EMBL" id="AE017042">
    <property type="protein sequence ID" value="AAS61675.1"/>
    <property type="molecule type" value="Genomic_DNA"/>
</dbReference>
<dbReference type="PIR" id="AE0188">
    <property type="entry name" value="AE0188"/>
</dbReference>
<dbReference type="RefSeq" id="WP_002211892.1">
    <property type="nucleotide sequence ID" value="NZ_WUCM01000031.1"/>
</dbReference>
<dbReference type="RefSeq" id="YP_002346561.1">
    <property type="nucleotide sequence ID" value="NC_003143.1"/>
</dbReference>
<dbReference type="SMR" id="Q8ZFX8"/>
<dbReference type="IntAct" id="Q8ZFX8">
    <property type="interactions" value="1"/>
</dbReference>
<dbReference type="STRING" id="214092.YPO1545"/>
<dbReference type="MEROPS" id="C26.965"/>
<dbReference type="PaxDb" id="214092-YPO1545"/>
<dbReference type="EnsemblBacteria" id="AAS61675">
    <property type="protein sequence ID" value="AAS61675"/>
    <property type="gene ID" value="YP_1434"/>
</dbReference>
<dbReference type="GeneID" id="57977023"/>
<dbReference type="KEGG" id="ype:YPO1545"/>
<dbReference type="KEGG" id="ypk:y2625"/>
<dbReference type="KEGG" id="ypm:YP_1434"/>
<dbReference type="PATRIC" id="fig|214092.21.peg.1882"/>
<dbReference type="eggNOG" id="COG0118">
    <property type="taxonomic scope" value="Bacteria"/>
</dbReference>
<dbReference type="HOGENOM" id="CLU_071837_0_0_6"/>
<dbReference type="OMA" id="WVYFVHS"/>
<dbReference type="OrthoDB" id="9807137at2"/>
<dbReference type="UniPathway" id="UPA00031">
    <property type="reaction ID" value="UER00010"/>
</dbReference>
<dbReference type="Proteomes" id="UP000000815">
    <property type="component" value="Chromosome"/>
</dbReference>
<dbReference type="Proteomes" id="UP000001019">
    <property type="component" value="Chromosome"/>
</dbReference>
<dbReference type="Proteomes" id="UP000002490">
    <property type="component" value="Chromosome"/>
</dbReference>
<dbReference type="GO" id="GO:0005737">
    <property type="term" value="C:cytoplasm"/>
    <property type="evidence" value="ECO:0007669"/>
    <property type="project" value="UniProtKB-SubCell"/>
</dbReference>
<dbReference type="GO" id="GO:0004359">
    <property type="term" value="F:glutaminase activity"/>
    <property type="evidence" value="ECO:0007669"/>
    <property type="project" value="UniProtKB-EC"/>
</dbReference>
<dbReference type="GO" id="GO:0000107">
    <property type="term" value="F:imidazoleglycerol-phosphate synthase activity"/>
    <property type="evidence" value="ECO:0000318"/>
    <property type="project" value="GO_Central"/>
</dbReference>
<dbReference type="GO" id="GO:0016829">
    <property type="term" value="F:lyase activity"/>
    <property type="evidence" value="ECO:0007669"/>
    <property type="project" value="UniProtKB-KW"/>
</dbReference>
<dbReference type="GO" id="GO:0000105">
    <property type="term" value="P:L-histidine biosynthetic process"/>
    <property type="evidence" value="ECO:0007669"/>
    <property type="project" value="UniProtKB-UniRule"/>
</dbReference>
<dbReference type="CDD" id="cd01748">
    <property type="entry name" value="GATase1_IGP_Synthase"/>
    <property type="match status" value="1"/>
</dbReference>
<dbReference type="FunFam" id="3.40.50.880:FF:000009">
    <property type="entry name" value="Imidazole glycerol phosphate synthase subunit HisH"/>
    <property type="match status" value="1"/>
</dbReference>
<dbReference type="Gene3D" id="3.40.50.880">
    <property type="match status" value="1"/>
</dbReference>
<dbReference type="HAMAP" id="MF_00278">
    <property type="entry name" value="HisH"/>
    <property type="match status" value="1"/>
</dbReference>
<dbReference type="InterPro" id="IPR029062">
    <property type="entry name" value="Class_I_gatase-like"/>
</dbReference>
<dbReference type="InterPro" id="IPR017926">
    <property type="entry name" value="GATASE"/>
</dbReference>
<dbReference type="InterPro" id="IPR010139">
    <property type="entry name" value="Imidazole-glycPsynth_HisH"/>
</dbReference>
<dbReference type="NCBIfam" id="TIGR01855">
    <property type="entry name" value="IMP_synth_hisH"/>
    <property type="match status" value="1"/>
</dbReference>
<dbReference type="PANTHER" id="PTHR42701">
    <property type="entry name" value="IMIDAZOLE GLYCEROL PHOSPHATE SYNTHASE SUBUNIT HISH"/>
    <property type="match status" value="1"/>
</dbReference>
<dbReference type="PANTHER" id="PTHR42701:SF1">
    <property type="entry name" value="IMIDAZOLE GLYCEROL PHOSPHATE SYNTHASE SUBUNIT HISH"/>
    <property type="match status" value="1"/>
</dbReference>
<dbReference type="Pfam" id="PF00117">
    <property type="entry name" value="GATase"/>
    <property type="match status" value="1"/>
</dbReference>
<dbReference type="PIRSF" id="PIRSF000495">
    <property type="entry name" value="Amidotransf_hisH"/>
    <property type="match status" value="1"/>
</dbReference>
<dbReference type="PRINTS" id="PR00096">
    <property type="entry name" value="GATASE"/>
</dbReference>
<dbReference type="SUPFAM" id="SSF52317">
    <property type="entry name" value="Class I glutamine amidotransferase-like"/>
    <property type="match status" value="1"/>
</dbReference>
<dbReference type="PROSITE" id="PS51273">
    <property type="entry name" value="GATASE_TYPE_1"/>
    <property type="match status" value="1"/>
</dbReference>
<gene>
    <name evidence="1" type="primary">hisH</name>
    <name type="ordered locus">YPO1545</name>
    <name type="ordered locus">y2625</name>
    <name type="ordered locus">YP_1434</name>
</gene>
<keyword id="KW-0028">Amino-acid biosynthesis</keyword>
<keyword id="KW-0963">Cytoplasm</keyword>
<keyword id="KW-0315">Glutamine amidotransferase</keyword>
<keyword id="KW-0368">Histidine biosynthesis</keyword>
<keyword id="KW-0378">Hydrolase</keyword>
<keyword id="KW-0456">Lyase</keyword>
<keyword id="KW-1185">Reference proteome</keyword>
<comment type="function">
    <text evidence="1">IGPS catalyzes the conversion of PRFAR and glutamine to IGP, AICAR and glutamate. The HisH subunit catalyzes the hydrolysis of glutamine to glutamate and ammonia as part of the synthesis of IGP and AICAR. The resulting ammonia molecule is channeled to the active site of HisF.</text>
</comment>
<comment type="catalytic activity">
    <reaction evidence="1">
        <text>5-[(5-phospho-1-deoxy-D-ribulos-1-ylimino)methylamino]-1-(5-phospho-beta-D-ribosyl)imidazole-4-carboxamide + L-glutamine = D-erythro-1-(imidazol-4-yl)glycerol 3-phosphate + 5-amino-1-(5-phospho-beta-D-ribosyl)imidazole-4-carboxamide + L-glutamate + H(+)</text>
        <dbReference type="Rhea" id="RHEA:24793"/>
        <dbReference type="ChEBI" id="CHEBI:15378"/>
        <dbReference type="ChEBI" id="CHEBI:29985"/>
        <dbReference type="ChEBI" id="CHEBI:58278"/>
        <dbReference type="ChEBI" id="CHEBI:58359"/>
        <dbReference type="ChEBI" id="CHEBI:58475"/>
        <dbReference type="ChEBI" id="CHEBI:58525"/>
        <dbReference type="EC" id="4.3.2.10"/>
    </reaction>
</comment>
<comment type="catalytic activity">
    <reaction evidence="1">
        <text>L-glutamine + H2O = L-glutamate + NH4(+)</text>
        <dbReference type="Rhea" id="RHEA:15889"/>
        <dbReference type="ChEBI" id="CHEBI:15377"/>
        <dbReference type="ChEBI" id="CHEBI:28938"/>
        <dbReference type="ChEBI" id="CHEBI:29985"/>
        <dbReference type="ChEBI" id="CHEBI:58359"/>
        <dbReference type="EC" id="3.5.1.2"/>
    </reaction>
</comment>
<comment type="pathway">
    <text evidence="1">Amino-acid biosynthesis; L-histidine biosynthesis; L-histidine from 5-phospho-alpha-D-ribose 1-diphosphate: step 5/9.</text>
</comment>
<comment type="subunit">
    <text evidence="1">Heterodimer of HisH and HisF.</text>
</comment>
<comment type="subcellular location">
    <subcellularLocation>
        <location evidence="1">Cytoplasm</location>
    </subcellularLocation>
</comment>